<reference key="1">
    <citation type="journal article" date="2005" name="Science">
        <title>The transcriptional landscape of the mammalian genome.</title>
        <authorList>
            <person name="Carninci P."/>
            <person name="Kasukawa T."/>
            <person name="Katayama S."/>
            <person name="Gough J."/>
            <person name="Frith M.C."/>
            <person name="Maeda N."/>
            <person name="Oyama R."/>
            <person name="Ravasi T."/>
            <person name="Lenhard B."/>
            <person name="Wells C."/>
            <person name="Kodzius R."/>
            <person name="Shimokawa K."/>
            <person name="Bajic V.B."/>
            <person name="Brenner S.E."/>
            <person name="Batalov S."/>
            <person name="Forrest A.R."/>
            <person name="Zavolan M."/>
            <person name="Davis M.J."/>
            <person name="Wilming L.G."/>
            <person name="Aidinis V."/>
            <person name="Allen J.E."/>
            <person name="Ambesi-Impiombato A."/>
            <person name="Apweiler R."/>
            <person name="Aturaliya R.N."/>
            <person name="Bailey T.L."/>
            <person name="Bansal M."/>
            <person name="Baxter L."/>
            <person name="Beisel K.W."/>
            <person name="Bersano T."/>
            <person name="Bono H."/>
            <person name="Chalk A.M."/>
            <person name="Chiu K.P."/>
            <person name="Choudhary V."/>
            <person name="Christoffels A."/>
            <person name="Clutterbuck D.R."/>
            <person name="Crowe M.L."/>
            <person name="Dalla E."/>
            <person name="Dalrymple B.P."/>
            <person name="de Bono B."/>
            <person name="Della Gatta G."/>
            <person name="di Bernardo D."/>
            <person name="Down T."/>
            <person name="Engstrom P."/>
            <person name="Fagiolini M."/>
            <person name="Faulkner G."/>
            <person name="Fletcher C.F."/>
            <person name="Fukushima T."/>
            <person name="Furuno M."/>
            <person name="Futaki S."/>
            <person name="Gariboldi M."/>
            <person name="Georgii-Hemming P."/>
            <person name="Gingeras T.R."/>
            <person name="Gojobori T."/>
            <person name="Green R.E."/>
            <person name="Gustincich S."/>
            <person name="Harbers M."/>
            <person name="Hayashi Y."/>
            <person name="Hensch T.K."/>
            <person name="Hirokawa N."/>
            <person name="Hill D."/>
            <person name="Huminiecki L."/>
            <person name="Iacono M."/>
            <person name="Ikeo K."/>
            <person name="Iwama A."/>
            <person name="Ishikawa T."/>
            <person name="Jakt M."/>
            <person name="Kanapin A."/>
            <person name="Katoh M."/>
            <person name="Kawasawa Y."/>
            <person name="Kelso J."/>
            <person name="Kitamura H."/>
            <person name="Kitano H."/>
            <person name="Kollias G."/>
            <person name="Krishnan S.P."/>
            <person name="Kruger A."/>
            <person name="Kummerfeld S.K."/>
            <person name="Kurochkin I.V."/>
            <person name="Lareau L.F."/>
            <person name="Lazarevic D."/>
            <person name="Lipovich L."/>
            <person name="Liu J."/>
            <person name="Liuni S."/>
            <person name="McWilliam S."/>
            <person name="Madan Babu M."/>
            <person name="Madera M."/>
            <person name="Marchionni L."/>
            <person name="Matsuda H."/>
            <person name="Matsuzawa S."/>
            <person name="Miki H."/>
            <person name="Mignone F."/>
            <person name="Miyake S."/>
            <person name="Morris K."/>
            <person name="Mottagui-Tabar S."/>
            <person name="Mulder N."/>
            <person name="Nakano N."/>
            <person name="Nakauchi H."/>
            <person name="Ng P."/>
            <person name="Nilsson R."/>
            <person name="Nishiguchi S."/>
            <person name="Nishikawa S."/>
            <person name="Nori F."/>
            <person name="Ohara O."/>
            <person name="Okazaki Y."/>
            <person name="Orlando V."/>
            <person name="Pang K.C."/>
            <person name="Pavan W.J."/>
            <person name="Pavesi G."/>
            <person name="Pesole G."/>
            <person name="Petrovsky N."/>
            <person name="Piazza S."/>
            <person name="Reed J."/>
            <person name="Reid J.F."/>
            <person name="Ring B.Z."/>
            <person name="Ringwald M."/>
            <person name="Rost B."/>
            <person name="Ruan Y."/>
            <person name="Salzberg S.L."/>
            <person name="Sandelin A."/>
            <person name="Schneider C."/>
            <person name="Schoenbach C."/>
            <person name="Sekiguchi K."/>
            <person name="Semple C.A."/>
            <person name="Seno S."/>
            <person name="Sessa L."/>
            <person name="Sheng Y."/>
            <person name="Shibata Y."/>
            <person name="Shimada H."/>
            <person name="Shimada K."/>
            <person name="Silva D."/>
            <person name="Sinclair B."/>
            <person name="Sperling S."/>
            <person name="Stupka E."/>
            <person name="Sugiura K."/>
            <person name="Sultana R."/>
            <person name="Takenaka Y."/>
            <person name="Taki K."/>
            <person name="Tammoja K."/>
            <person name="Tan S.L."/>
            <person name="Tang S."/>
            <person name="Taylor M.S."/>
            <person name="Tegner J."/>
            <person name="Teichmann S.A."/>
            <person name="Ueda H.R."/>
            <person name="van Nimwegen E."/>
            <person name="Verardo R."/>
            <person name="Wei C.L."/>
            <person name="Yagi K."/>
            <person name="Yamanishi H."/>
            <person name="Zabarovsky E."/>
            <person name="Zhu S."/>
            <person name="Zimmer A."/>
            <person name="Hide W."/>
            <person name="Bult C."/>
            <person name="Grimmond S.M."/>
            <person name="Teasdale R.D."/>
            <person name="Liu E.T."/>
            <person name="Brusic V."/>
            <person name="Quackenbush J."/>
            <person name="Wahlestedt C."/>
            <person name="Mattick J.S."/>
            <person name="Hume D.A."/>
            <person name="Kai C."/>
            <person name="Sasaki D."/>
            <person name="Tomaru Y."/>
            <person name="Fukuda S."/>
            <person name="Kanamori-Katayama M."/>
            <person name="Suzuki M."/>
            <person name="Aoki J."/>
            <person name="Arakawa T."/>
            <person name="Iida J."/>
            <person name="Imamura K."/>
            <person name="Itoh M."/>
            <person name="Kato T."/>
            <person name="Kawaji H."/>
            <person name="Kawagashira N."/>
            <person name="Kawashima T."/>
            <person name="Kojima M."/>
            <person name="Kondo S."/>
            <person name="Konno H."/>
            <person name="Nakano K."/>
            <person name="Ninomiya N."/>
            <person name="Nishio T."/>
            <person name="Okada M."/>
            <person name="Plessy C."/>
            <person name="Shibata K."/>
            <person name="Shiraki T."/>
            <person name="Suzuki S."/>
            <person name="Tagami M."/>
            <person name="Waki K."/>
            <person name="Watahiki A."/>
            <person name="Okamura-Oho Y."/>
            <person name="Suzuki H."/>
            <person name="Kawai J."/>
            <person name="Hayashizaki Y."/>
        </authorList>
    </citation>
    <scope>NUCLEOTIDE SEQUENCE [LARGE SCALE MRNA]</scope>
    <source>
        <strain>C57BL/6J</strain>
        <tissue>Liver</tissue>
        <tissue>Small intestine</tissue>
    </source>
</reference>
<reference key="2">
    <citation type="journal article" date="2004" name="Genome Res.">
        <title>The status, quality, and expansion of the NIH full-length cDNA project: the Mammalian Gene Collection (MGC).</title>
        <authorList>
            <consortium name="The MGC Project Team"/>
        </authorList>
    </citation>
    <scope>NUCLEOTIDE SEQUENCE [LARGE SCALE MRNA]</scope>
    <source>
        <strain>FVB/N</strain>
        <tissue>Liver</tissue>
    </source>
</reference>
<reference key="3">
    <citation type="journal article" date="2007" name="Drug Metab. Dispos.">
        <title>Tissue- and gender-specific mRNA expression of UDP-glucuronosyltransferases (UGTs) in mice.</title>
        <authorList>
            <person name="Buckley D.B."/>
            <person name="Klaassen C.D."/>
        </authorList>
    </citation>
    <scope>TISSUE SPECIFICITY</scope>
</reference>
<reference key="4">
    <citation type="journal article" date="2010" name="Cell">
        <title>A tissue-specific atlas of mouse protein phosphorylation and expression.</title>
        <authorList>
            <person name="Huttlin E.L."/>
            <person name="Jedrychowski M.P."/>
            <person name="Elias J.E."/>
            <person name="Goswami T."/>
            <person name="Rad R."/>
            <person name="Beausoleil S.A."/>
            <person name="Villen J."/>
            <person name="Haas W."/>
            <person name="Sowa M.E."/>
            <person name="Gygi S.P."/>
        </authorList>
    </citation>
    <scope>IDENTIFICATION BY MASS SPECTROMETRY [LARGE SCALE ANALYSIS]</scope>
    <source>
        <tissue>Liver</tissue>
    </source>
</reference>
<reference key="5">
    <citation type="journal article" date="2013" name="Mol. Cell">
        <title>SIRT5-mediated lysine desuccinylation impacts diverse metabolic pathways.</title>
        <authorList>
            <person name="Park J."/>
            <person name="Chen Y."/>
            <person name="Tishkoff D.X."/>
            <person name="Peng C."/>
            <person name="Tan M."/>
            <person name="Dai L."/>
            <person name="Xie Z."/>
            <person name="Zhang Y."/>
            <person name="Zwaans B.M."/>
            <person name="Skinner M.E."/>
            <person name="Lombard D.B."/>
            <person name="Zhao Y."/>
        </authorList>
    </citation>
    <scope>SUCCINYLATION [LARGE SCALE ANALYSIS] AT LYS-135</scope>
    <scope>IDENTIFICATION BY MASS SPECTROMETRY [LARGE SCALE ANALYSIS]</scope>
    <source>
        <tissue>Liver</tissue>
    </source>
</reference>
<name>UD2A3_MOUSE</name>
<sequence length="534" mass="61119">MVSEKCVAAFFLLQLCWAGCGFCSKVLVWPCDMSHWLNLKTILEELGARGHEVTVLKYPSIIIDQSKRIPLHFENIPLLYEIETAENRLNEIANLAVNVIPNLSLWEAAKTLQDFFLQVTGDFESICRSVLYNQKFMDKLRDAQYDVVVIDPVVPCGELVAEVLQIPFVYTLRFSMGYYMEKHCGQLPIPLSYVPVVMSELTDNMTFTERVKNMMFSLLFEYWLQQYDFAFWDQFYSETLGRPTTFCKTVGKADIWLIRTYWDVEFPRPYLPNFEFVGGLHCKPAKPLPKEMEEFVQSSGEHGVVVFSLGSMVKNLTEEKANLIASVLAQIPQKVLWRYSGKKPATLGSNTRLFNWIPQNDLLGHPKTKAFITHGGTNGIYEAIYHGVPMVGVPMLGDQPHNIAHMEAKGAALKVSISTMTSTDLLSAVRAVINEPSYKENAMRLSRIHHDQPVKPLDRAVFWIEFVMRHKGAKHLRVAAHDLSWFQYHSLDVIGFLLLCVVTLTFIITKFCLFVCQKLYMKESKKMGNRKKKN</sequence>
<feature type="signal peptide" evidence="2">
    <location>
        <begin position="1"/>
        <end position="18"/>
    </location>
</feature>
<feature type="chain" id="PRO_0000299147" description="UDP-glucuronosyltransferase 2A3">
    <location>
        <begin position="19"/>
        <end position="534"/>
    </location>
</feature>
<feature type="topological domain" description="Extracellular" evidence="2">
    <location>
        <begin position="19"/>
        <end position="493"/>
    </location>
</feature>
<feature type="transmembrane region" description="Helical" evidence="2">
    <location>
        <begin position="494"/>
        <end position="514"/>
    </location>
</feature>
<feature type="topological domain" description="Cytoplasmic" evidence="2">
    <location>
        <begin position="515"/>
        <end position="534"/>
    </location>
</feature>
<feature type="modified residue" description="N6-succinyllysine" evidence="5">
    <location>
        <position position="135"/>
    </location>
</feature>
<feature type="glycosylation site" description="N-linked (GlcNAc...) asparagine" evidence="2">
    <location>
        <position position="102"/>
    </location>
</feature>
<feature type="glycosylation site" description="N-linked (GlcNAc...) asparagine" evidence="2">
    <location>
        <position position="204"/>
    </location>
</feature>
<feature type="sequence conflict" description="In Ref. 1; BAB25770." evidence="4" ref="1">
    <original>K</original>
    <variation>E</variation>
    <location>
        <position position="252"/>
    </location>
</feature>
<feature type="sequence conflict" description="In Ref. 2; AAH25795." evidence="4" ref="2">
    <original>P</original>
    <variation>S</variation>
    <location>
        <position position="284"/>
    </location>
</feature>
<feature type="sequence conflict" description="In Ref. 1; BAB25770." evidence="4" ref="1">
    <original>T</original>
    <variation>I</variation>
    <location>
        <position position="346"/>
    </location>
</feature>
<gene>
    <name type="primary">Ugt2a3</name>
</gene>
<comment type="function">
    <text evidence="1">UDP-glucuronosyltransferases catalyze phase II biotransformation reactions in which lipophilic substrates are conjugated with glucuronic acid to increase water solubility and enhance excretion. They are of major importance in the conjugation and subsequent elimination of potentially toxic xenobiotics and endogenous compounds (By similarity).</text>
</comment>
<comment type="catalytic activity">
    <reaction>
        <text>glucuronate acceptor + UDP-alpha-D-glucuronate = acceptor beta-D-glucuronoside + UDP + H(+)</text>
        <dbReference type="Rhea" id="RHEA:21032"/>
        <dbReference type="ChEBI" id="CHEBI:15378"/>
        <dbReference type="ChEBI" id="CHEBI:58052"/>
        <dbReference type="ChEBI" id="CHEBI:58223"/>
        <dbReference type="ChEBI" id="CHEBI:132367"/>
        <dbReference type="ChEBI" id="CHEBI:132368"/>
        <dbReference type="EC" id="2.4.1.17"/>
    </reaction>
</comment>
<comment type="subcellular location">
    <subcellularLocation>
        <location evidence="4">Membrane</location>
        <topology evidence="4">Single-pass type I membrane protein</topology>
    </subcellularLocation>
</comment>
<comment type="tissue specificity">
    <text evidence="3">Highly expressed in liver, with lower levels in duodenum and jejunum.</text>
</comment>
<comment type="similarity">
    <text evidence="4">Belongs to the UDP-glycosyltransferase family.</text>
</comment>
<protein>
    <recommendedName>
        <fullName>UDP-glucuronosyltransferase 2A3</fullName>
        <shortName>UDPGT 2A3</shortName>
        <ecNumber>2.4.1.17</ecNumber>
    </recommendedName>
</protein>
<accession>Q8BWQ1</accession>
<accession>Q8R129</accession>
<accession>Q9D811</accession>
<proteinExistence type="evidence at protein level"/>
<dbReference type="EC" id="2.4.1.17"/>
<dbReference type="EMBL" id="AK008601">
    <property type="protein sequence ID" value="BAB25770.1"/>
    <property type="molecule type" value="mRNA"/>
</dbReference>
<dbReference type="EMBL" id="AK050327">
    <property type="protein sequence ID" value="BAC34191.1"/>
    <property type="molecule type" value="mRNA"/>
</dbReference>
<dbReference type="EMBL" id="BC025795">
    <property type="protein sequence ID" value="AAH25795.1"/>
    <property type="molecule type" value="mRNA"/>
</dbReference>
<dbReference type="CCDS" id="CCDS19387.1"/>
<dbReference type="RefSeq" id="NP_082370.2">
    <property type="nucleotide sequence ID" value="NM_028094.4"/>
</dbReference>
<dbReference type="SMR" id="Q8BWQ1"/>
<dbReference type="BioGRID" id="215148">
    <property type="interactions" value="1"/>
</dbReference>
<dbReference type="FunCoup" id="Q8BWQ1">
    <property type="interactions" value="376"/>
</dbReference>
<dbReference type="STRING" id="10090.ENSMUSP00000031195"/>
<dbReference type="CAZy" id="GT1">
    <property type="family name" value="Glycosyltransferase Family 1"/>
</dbReference>
<dbReference type="GlyCosmos" id="Q8BWQ1">
    <property type="glycosylation" value="2 sites, No reported glycans"/>
</dbReference>
<dbReference type="GlyGen" id="Q8BWQ1">
    <property type="glycosylation" value="3 sites, 1 O-linked glycan (1 site)"/>
</dbReference>
<dbReference type="iPTMnet" id="Q8BWQ1"/>
<dbReference type="PhosphoSitePlus" id="Q8BWQ1"/>
<dbReference type="SwissPalm" id="Q8BWQ1"/>
<dbReference type="jPOST" id="Q8BWQ1"/>
<dbReference type="PaxDb" id="10090-ENSMUSP00000031195"/>
<dbReference type="PeptideAtlas" id="Q8BWQ1"/>
<dbReference type="ProteomicsDB" id="297801"/>
<dbReference type="Antibodypedia" id="24205">
    <property type="antibodies" value="126 antibodies from 19 providers"/>
</dbReference>
<dbReference type="DNASU" id="72094"/>
<dbReference type="Ensembl" id="ENSMUST00000031195.3">
    <property type="protein sequence ID" value="ENSMUSP00000031195.3"/>
    <property type="gene ID" value="ENSMUSG00000035780.3"/>
</dbReference>
<dbReference type="GeneID" id="72094"/>
<dbReference type="KEGG" id="mmu:72094"/>
<dbReference type="UCSC" id="uc008xyh.2">
    <property type="organism name" value="mouse"/>
</dbReference>
<dbReference type="AGR" id="MGI:1919344"/>
<dbReference type="CTD" id="79799"/>
<dbReference type="MGI" id="MGI:1919344">
    <property type="gene designation" value="Ugt2a3"/>
</dbReference>
<dbReference type="VEuPathDB" id="HostDB:ENSMUSG00000035780"/>
<dbReference type="eggNOG" id="KOG1192">
    <property type="taxonomic scope" value="Eukaryota"/>
</dbReference>
<dbReference type="GeneTree" id="ENSGT00940000162432"/>
<dbReference type="HOGENOM" id="CLU_012949_0_2_1"/>
<dbReference type="InParanoid" id="Q8BWQ1"/>
<dbReference type="OMA" id="MAIMLDF"/>
<dbReference type="OrthoDB" id="5835829at2759"/>
<dbReference type="PhylomeDB" id="Q8BWQ1"/>
<dbReference type="TreeFam" id="TF315472"/>
<dbReference type="Reactome" id="R-MMU-156588">
    <property type="pathway name" value="Glucuronidation"/>
</dbReference>
<dbReference type="Reactome" id="R-MMU-9749641">
    <property type="pathway name" value="Aspirin ADME"/>
</dbReference>
<dbReference type="BioGRID-ORCS" id="72094">
    <property type="hits" value="3 hits in 75 CRISPR screens"/>
</dbReference>
<dbReference type="ChiTaRS" id="Ugt2a3">
    <property type="organism name" value="mouse"/>
</dbReference>
<dbReference type="PRO" id="PR:Q8BWQ1"/>
<dbReference type="Proteomes" id="UP000000589">
    <property type="component" value="Chromosome 5"/>
</dbReference>
<dbReference type="RNAct" id="Q8BWQ1">
    <property type="molecule type" value="protein"/>
</dbReference>
<dbReference type="Bgee" id="ENSMUSG00000035780">
    <property type="expression patterns" value="Expressed in left lobe of liver and 40 other cell types or tissues"/>
</dbReference>
<dbReference type="GO" id="GO:0016020">
    <property type="term" value="C:membrane"/>
    <property type="evidence" value="ECO:0007669"/>
    <property type="project" value="UniProtKB-SubCell"/>
</dbReference>
<dbReference type="GO" id="GO:0015020">
    <property type="term" value="F:glucuronosyltransferase activity"/>
    <property type="evidence" value="ECO:0007669"/>
    <property type="project" value="UniProtKB-EC"/>
</dbReference>
<dbReference type="CDD" id="cd03784">
    <property type="entry name" value="GT1_Gtf-like"/>
    <property type="match status" value="1"/>
</dbReference>
<dbReference type="FunFam" id="3.40.50.2000:FF:000001">
    <property type="entry name" value="UDP-glucuronosyltransferase"/>
    <property type="match status" value="1"/>
</dbReference>
<dbReference type="FunFam" id="3.40.50.2000:FF:000081">
    <property type="entry name" value="UDP-glucuronosyltransferase 2A2"/>
    <property type="match status" value="1"/>
</dbReference>
<dbReference type="Gene3D" id="3.40.50.2000">
    <property type="entry name" value="Glycogen Phosphorylase B"/>
    <property type="match status" value="2"/>
</dbReference>
<dbReference type="InterPro" id="IPR050271">
    <property type="entry name" value="UDP-glycosyltransferase"/>
</dbReference>
<dbReference type="InterPro" id="IPR002213">
    <property type="entry name" value="UDP_glucos_trans"/>
</dbReference>
<dbReference type="InterPro" id="IPR035595">
    <property type="entry name" value="UDP_glycos_trans_CS"/>
</dbReference>
<dbReference type="PANTHER" id="PTHR48043">
    <property type="entry name" value="EG:EG0003.4 PROTEIN-RELATED"/>
    <property type="match status" value="1"/>
</dbReference>
<dbReference type="PANTHER" id="PTHR48043:SF137">
    <property type="entry name" value="UDP-GLUCURONOSYLTRANSFERASE 2A3"/>
    <property type="match status" value="1"/>
</dbReference>
<dbReference type="Pfam" id="PF00201">
    <property type="entry name" value="UDPGT"/>
    <property type="match status" value="1"/>
</dbReference>
<dbReference type="SUPFAM" id="SSF53756">
    <property type="entry name" value="UDP-Glycosyltransferase/glycogen phosphorylase"/>
    <property type="match status" value="1"/>
</dbReference>
<dbReference type="PROSITE" id="PS00375">
    <property type="entry name" value="UDPGT"/>
    <property type="match status" value="1"/>
</dbReference>
<keyword id="KW-0325">Glycoprotein</keyword>
<keyword id="KW-0328">Glycosyltransferase</keyword>
<keyword id="KW-0472">Membrane</keyword>
<keyword id="KW-1185">Reference proteome</keyword>
<keyword id="KW-0732">Signal</keyword>
<keyword id="KW-0808">Transferase</keyword>
<keyword id="KW-0812">Transmembrane</keyword>
<keyword id="KW-1133">Transmembrane helix</keyword>
<evidence type="ECO:0000250" key="1"/>
<evidence type="ECO:0000255" key="2"/>
<evidence type="ECO:0000269" key="3">
    <source>
    </source>
</evidence>
<evidence type="ECO:0000305" key="4"/>
<evidence type="ECO:0007744" key="5">
    <source>
    </source>
</evidence>
<organism>
    <name type="scientific">Mus musculus</name>
    <name type="common">Mouse</name>
    <dbReference type="NCBI Taxonomy" id="10090"/>
    <lineage>
        <taxon>Eukaryota</taxon>
        <taxon>Metazoa</taxon>
        <taxon>Chordata</taxon>
        <taxon>Craniata</taxon>
        <taxon>Vertebrata</taxon>
        <taxon>Euteleostomi</taxon>
        <taxon>Mammalia</taxon>
        <taxon>Eutheria</taxon>
        <taxon>Euarchontoglires</taxon>
        <taxon>Glires</taxon>
        <taxon>Rodentia</taxon>
        <taxon>Myomorpha</taxon>
        <taxon>Muroidea</taxon>
        <taxon>Muridae</taxon>
        <taxon>Murinae</taxon>
        <taxon>Mus</taxon>
        <taxon>Mus</taxon>
    </lineage>
</organism>